<dbReference type="EMBL" id="CH379069">
    <property type="protein sequence ID" value="EAL30982.1"/>
    <property type="status" value="ALT_SEQ"/>
    <property type="molecule type" value="Genomic_DNA"/>
</dbReference>
<dbReference type="EMBL" id="X03812">
    <property type="protein sequence ID" value="CAA27439.1"/>
    <property type="molecule type" value="Genomic_DNA"/>
</dbReference>
<dbReference type="EMBL" id="AF006529">
    <property type="protein sequence ID" value="AAC07914.1"/>
    <property type="molecule type" value="Genomic_DNA"/>
</dbReference>
<dbReference type="EMBL" id="AF006530">
    <property type="protein sequence ID" value="AAC07915.1"/>
    <property type="molecule type" value="Genomic_DNA"/>
</dbReference>
<dbReference type="EMBL" id="AF006531">
    <property type="protein sequence ID" value="AAC07916.1"/>
    <property type="molecule type" value="Genomic_DNA"/>
</dbReference>
<dbReference type="EMBL" id="AF006532">
    <property type="protein sequence ID" value="AAC07917.1"/>
    <property type="molecule type" value="Genomic_DNA"/>
</dbReference>
<dbReference type="EMBL" id="AF006533">
    <property type="protein sequence ID" value="AAC07918.1"/>
    <property type="molecule type" value="Genomic_DNA"/>
</dbReference>
<dbReference type="EMBL" id="AF006534">
    <property type="protein sequence ID" value="AAC07919.1"/>
    <property type="molecule type" value="Genomic_DNA"/>
</dbReference>
<dbReference type="EMBL" id="AF006535">
    <property type="protein sequence ID" value="AAC07920.1"/>
    <property type="molecule type" value="Genomic_DNA"/>
</dbReference>
<dbReference type="EMBL" id="AF006536">
    <property type="protein sequence ID" value="AAC07921.1"/>
    <property type="molecule type" value="Genomic_DNA"/>
</dbReference>
<dbReference type="EMBL" id="AF006537">
    <property type="protein sequence ID" value="AAC07922.1"/>
    <property type="molecule type" value="Genomic_DNA"/>
</dbReference>
<dbReference type="EMBL" id="AF006538">
    <property type="protein sequence ID" value="AAC07923.1"/>
    <property type="molecule type" value="Genomic_DNA"/>
</dbReference>
<dbReference type="EMBL" id="AF006539">
    <property type="protein sequence ID" value="AAC07924.1"/>
    <property type="molecule type" value="Genomic_DNA"/>
</dbReference>
<dbReference type="PIR" id="C24827">
    <property type="entry name" value="C24827"/>
</dbReference>
<dbReference type="RefSeq" id="XP_001353471.1">
    <property type="nucleotide sequence ID" value="XM_001353435.3"/>
</dbReference>
<dbReference type="SMR" id="P04809"/>
<dbReference type="FunCoup" id="P04809">
    <property type="interactions" value="1408"/>
</dbReference>
<dbReference type="STRING" id="46245.P04809"/>
<dbReference type="EnsemblMetazoa" id="FBtr0276082">
    <property type="protein sequence ID" value="FBpp0274520"/>
    <property type="gene ID" value="FBgn0012701"/>
</dbReference>
<dbReference type="GeneID" id="4813013"/>
<dbReference type="KEGG" id="dpo:4813013"/>
<dbReference type="CTD" id="38389"/>
<dbReference type="eggNOG" id="KOG0019">
    <property type="taxonomic scope" value="Eukaryota"/>
</dbReference>
<dbReference type="HOGENOM" id="CLU_006684_1_3_1"/>
<dbReference type="InParanoid" id="P04809"/>
<dbReference type="OMA" id="MRRMKEM"/>
<dbReference type="PhylomeDB" id="P04809"/>
<dbReference type="ChiTaRS" id="Hsp83">
    <property type="organism name" value="fly"/>
</dbReference>
<dbReference type="Proteomes" id="UP000001819">
    <property type="component" value="Chromosome X"/>
</dbReference>
<dbReference type="Bgee" id="FBgn0012701">
    <property type="expression patterns" value="Expressed in female reproductive system and 3 other cell types or tissues"/>
</dbReference>
<dbReference type="GO" id="GO:0005737">
    <property type="term" value="C:cytoplasm"/>
    <property type="evidence" value="ECO:0007669"/>
    <property type="project" value="UniProtKB-SubCell"/>
</dbReference>
<dbReference type="GO" id="GO:0005524">
    <property type="term" value="F:ATP binding"/>
    <property type="evidence" value="ECO:0007669"/>
    <property type="project" value="UniProtKB-KW"/>
</dbReference>
<dbReference type="GO" id="GO:0016887">
    <property type="term" value="F:ATP hydrolysis activity"/>
    <property type="evidence" value="ECO:0007669"/>
    <property type="project" value="InterPro"/>
</dbReference>
<dbReference type="GO" id="GO:0140662">
    <property type="term" value="F:ATP-dependent protein folding chaperone"/>
    <property type="evidence" value="ECO:0007669"/>
    <property type="project" value="InterPro"/>
</dbReference>
<dbReference type="GO" id="GO:0051082">
    <property type="term" value="F:unfolded protein binding"/>
    <property type="evidence" value="ECO:0007669"/>
    <property type="project" value="InterPro"/>
</dbReference>
<dbReference type="CDD" id="cd16927">
    <property type="entry name" value="HATPase_Hsp90-like"/>
    <property type="match status" value="1"/>
</dbReference>
<dbReference type="FunFam" id="1.20.120.790:FF:000001">
    <property type="entry name" value="Heat shock protein 90 alpha"/>
    <property type="match status" value="1"/>
</dbReference>
<dbReference type="FunFam" id="3.30.230.80:FF:000001">
    <property type="entry name" value="Heat shock protein 90 alpha"/>
    <property type="match status" value="1"/>
</dbReference>
<dbReference type="FunFam" id="3.40.50.11260:FF:000001">
    <property type="entry name" value="Heat shock protein 90 alpha"/>
    <property type="match status" value="1"/>
</dbReference>
<dbReference type="FunFam" id="3.30.565.10:FF:000001">
    <property type="entry name" value="Heat shock protein HSP 90-alpha"/>
    <property type="match status" value="1"/>
</dbReference>
<dbReference type="Gene3D" id="3.30.230.80">
    <property type="match status" value="1"/>
</dbReference>
<dbReference type="Gene3D" id="3.40.50.11260">
    <property type="match status" value="1"/>
</dbReference>
<dbReference type="Gene3D" id="1.20.120.790">
    <property type="entry name" value="Heat shock protein 90, C-terminal domain"/>
    <property type="match status" value="1"/>
</dbReference>
<dbReference type="Gene3D" id="3.30.565.10">
    <property type="entry name" value="Histidine kinase-like ATPase, C-terminal domain"/>
    <property type="match status" value="1"/>
</dbReference>
<dbReference type="HAMAP" id="MF_00505">
    <property type="entry name" value="HSP90"/>
    <property type="match status" value="1"/>
</dbReference>
<dbReference type="InterPro" id="IPR036890">
    <property type="entry name" value="HATPase_C_sf"/>
</dbReference>
<dbReference type="InterPro" id="IPR019805">
    <property type="entry name" value="Heat_shock_protein_90_CS"/>
</dbReference>
<dbReference type="InterPro" id="IPR037196">
    <property type="entry name" value="HSP90_C"/>
</dbReference>
<dbReference type="InterPro" id="IPR001404">
    <property type="entry name" value="Hsp90_fam"/>
</dbReference>
<dbReference type="InterPro" id="IPR020575">
    <property type="entry name" value="Hsp90_N"/>
</dbReference>
<dbReference type="InterPro" id="IPR020568">
    <property type="entry name" value="Ribosomal_Su5_D2-typ_SF"/>
</dbReference>
<dbReference type="NCBIfam" id="NF003555">
    <property type="entry name" value="PRK05218.1"/>
    <property type="match status" value="1"/>
</dbReference>
<dbReference type="PANTHER" id="PTHR11528">
    <property type="entry name" value="HEAT SHOCK PROTEIN 90 FAMILY MEMBER"/>
    <property type="match status" value="1"/>
</dbReference>
<dbReference type="Pfam" id="PF13589">
    <property type="entry name" value="HATPase_c_3"/>
    <property type="match status" value="1"/>
</dbReference>
<dbReference type="Pfam" id="PF00183">
    <property type="entry name" value="HSP90"/>
    <property type="match status" value="1"/>
</dbReference>
<dbReference type="PIRSF" id="PIRSF002583">
    <property type="entry name" value="Hsp90"/>
    <property type="match status" value="1"/>
</dbReference>
<dbReference type="PRINTS" id="PR00775">
    <property type="entry name" value="HEATSHOCK90"/>
</dbReference>
<dbReference type="SMART" id="SM00387">
    <property type="entry name" value="HATPase_c"/>
    <property type="match status" value="1"/>
</dbReference>
<dbReference type="SUPFAM" id="SSF55874">
    <property type="entry name" value="ATPase domain of HSP90 chaperone/DNA topoisomerase II/histidine kinase"/>
    <property type="match status" value="1"/>
</dbReference>
<dbReference type="SUPFAM" id="SSF110942">
    <property type="entry name" value="HSP90 C-terminal domain"/>
    <property type="match status" value="1"/>
</dbReference>
<dbReference type="SUPFAM" id="SSF54211">
    <property type="entry name" value="Ribosomal protein S5 domain 2-like"/>
    <property type="match status" value="1"/>
</dbReference>
<dbReference type="PROSITE" id="PS00298">
    <property type="entry name" value="HSP90"/>
    <property type="match status" value="1"/>
</dbReference>
<keyword id="KW-0067">ATP-binding</keyword>
<keyword id="KW-0143">Chaperone</keyword>
<keyword id="KW-0963">Cytoplasm</keyword>
<keyword id="KW-0547">Nucleotide-binding</keyword>
<keyword id="KW-1185">Reference proteome</keyword>
<keyword id="KW-0346">Stress response</keyword>
<sequence length="717" mass="81771">MPEEAETFAFQAEIAQLMSLIINTFYSNKEIFLRELISNASDALDKIRYESLTDPSKLDSGKELYIKLIPNKTAGTLTIIDTGIGMTKSDLVNNLGTIAKSGTKAFMEALQAGADISMIGQFGVGFYSAYLIADRVTVTSKNNDDEQYVWESSAGGSFTVKADNSEPLGRGTKIVLYIKEDQTDYLEESKIKEIVNKHSQFIGYPIKLLVEKEREKEVSDDEADDEKKDDEAKKDMDTDEPKIEDVGEDEDADKKDKDGKKKKTIKEKYTEDEELNKTKPIWTRNPDDISQEEYGEFYKSLTNDWEDHLCVKHFSVEGQLEFRALLFIPRRTPFDLFENQKKRNNIKLYVRRVFIMDNCEDLIPEYLNFIKGVVDSEDLPLNISREMLQQNKVLKVIRKNLVKKTMELIEELTEDKENYKKFYEQFSKNLKLGVHEDSNNRAKLADFLRFHTSASGDDFCSLSDYVSRMKENQKHVYFITGESKDQVSNSAFVERVKARGFEVVYMTEPIDEYVIQHLKEYKGKQLVSVTKEGLELPEDEAEKKKREEDKAKFEGLCKLMKSILDSKVEKVVVSNRLVDSPCCIVTSQFGWSANMERIMKAQALRDTATMGYMAGKKQLEINPDHPIVEALRQKADADKNDKAVKDLVILLFETSLLSSGFSLDSPQVHASRIYRMIKLGLGIDEDEPMTTEDAHSGGDAPGLVEDTEDASHMEEVD</sequence>
<gene>
    <name type="primary">Hsp83</name>
    <name type="synonym">Hsp82</name>
    <name type="ORF">GA11622</name>
</gene>
<organism>
    <name type="scientific">Drosophila pseudoobscura pseudoobscura</name>
    <name type="common">Fruit fly</name>
    <dbReference type="NCBI Taxonomy" id="46245"/>
    <lineage>
        <taxon>Eukaryota</taxon>
        <taxon>Metazoa</taxon>
        <taxon>Ecdysozoa</taxon>
        <taxon>Arthropoda</taxon>
        <taxon>Hexapoda</taxon>
        <taxon>Insecta</taxon>
        <taxon>Pterygota</taxon>
        <taxon>Neoptera</taxon>
        <taxon>Endopterygota</taxon>
        <taxon>Diptera</taxon>
        <taxon>Brachycera</taxon>
        <taxon>Muscomorpha</taxon>
        <taxon>Ephydroidea</taxon>
        <taxon>Drosophilidae</taxon>
        <taxon>Drosophila</taxon>
        <taxon>Sophophora</taxon>
    </lineage>
</organism>
<name>HSP83_DROPS</name>
<reference key="1">
    <citation type="journal article" date="2005" name="Genome Res.">
        <title>Comparative genome sequencing of Drosophila pseudoobscura: chromosomal, gene, and cis-element evolution.</title>
        <authorList>
            <person name="Richards S."/>
            <person name="Liu Y."/>
            <person name="Bettencourt B.R."/>
            <person name="Hradecky P."/>
            <person name="Letovsky S."/>
            <person name="Nielsen R."/>
            <person name="Thornton K."/>
            <person name="Hubisz M.J."/>
            <person name="Chen R."/>
            <person name="Meisel R.P."/>
            <person name="Couronne O."/>
            <person name="Hua S."/>
            <person name="Smith M.A."/>
            <person name="Zhang P."/>
            <person name="Liu J."/>
            <person name="Bussemaker H.J."/>
            <person name="van Batenburg M.F."/>
            <person name="Howells S.L."/>
            <person name="Scherer S.E."/>
            <person name="Sodergren E."/>
            <person name="Matthews B.B."/>
            <person name="Crosby M.A."/>
            <person name="Schroeder A.J."/>
            <person name="Ortiz-Barrientos D."/>
            <person name="Rives C.M."/>
            <person name="Metzker M.L."/>
            <person name="Muzny D.M."/>
            <person name="Scott G."/>
            <person name="Steffen D."/>
            <person name="Wheeler D.A."/>
            <person name="Worley K.C."/>
            <person name="Havlak P."/>
            <person name="Durbin K.J."/>
            <person name="Egan A."/>
            <person name="Gill R."/>
            <person name="Hume J."/>
            <person name="Morgan M.B."/>
            <person name="Miner G."/>
            <person name="Hamilton C."/>
            <person name="Huang Y."/>
            <person name="Waldron L."/>
            <person name="Verduzco D."/>
            <person name="Clerc-Blankenburg K.P."/>
            <person name="Dubchak I."/>
            <person name="Noor M.A.F."/>
            <person name="Anderson W."/>
            <person name="White K.P."/>
            <person name="Clark A.G."/>
            <person name="Schaeffer S.W."/>
            <person name="Gelbart W.M."/>
            <person name="Weinstock G.M."/>
            <person name="Gibbs R.A."/>
        </authorList>
    </citation>
    <scope>NUCLEOTIDE SEQUENCE [LARGE SCALE GENOMIC DNA]</scope>
    <source>
        <strain>MV2-25 / Tucson 14011-0121.94</strain>
    </source>
</reference>
<reference key="2">
    <citation type="journal article" date="1986" name="J. Mol. Biol.">
        <title>Interspecific nucleotide sequence comparisons used to identify regulatory and structural features of the Drosophila hsp82 gene.</title>
        <authorList>
            <person name="Blackman R.K."/>
            <person name="Meselson M."/>
        </authorList>
    </citation>
    <scope>NUCLEOTIDE SEQUENCE [GENOMIC DNA] OF 1-375</scope>
</reference>
<reference key="3">
    <citation type="journal article" date="1997" name="Genetics">
        <title>Gene flow and natural selection in the origin of Drosophila pseudoobscura and close relatives.</title>
        <authorList>
            <person name="Wang R.L."/>
            <person name="Wakeley J."/>
            <person name="Hey J."/>
        </authorList>
    </citation>
    <scope>NUCLEOTIDE SEQUENCE [GENOMIC DNA] OF 1-269</scope>
    <scope>VARIANTS</scope>
    <source>
        <strain>pseudo1</strain>
        <strain>pseudo10</strain>
        <strain>pseudo11</strain>
        <strain>pseudo2</strain>
        <strain>pseudo3</strain>
        <strain>pseudo4</strain>
        <strain>pseudo5</strain>
        <strain>pseudo6</strain>
        <strain>pseudo7</strain>
        <strain>pseudo8</strain>
        <strain>pseudo9</strain>
    </source>
</reference>
<evidence type="ECO:0000250" key="1"/>
<evidence type="ECO:0000256" key="2">
    <source>
        <dbReference type="SAM" id="MobiDB-lite"/>
    </source>
</evidence>
<evidence type="ECO:0000305" key="3"/>
<proteinExistence type="inferred from homology"/>
<accession>P04809</accession>
<accession>O16059</accession>
<accession>O16060</accession>
<accession>O16061</accession>
<accession>O16062</accession>
<accession>O16063</accession>
<accession>O16064</accession>
<accession>O16065</accession>
<accession>O16066</accession>
<accession>O16067</accession>
<accession>O18670</accession>
<accession>Q2M0F2</accession>
<protein>
    <recommendedName>
        <fullName>Heat shock protein 83</fullName>
    </recommendedName>
    <alternativeName>
        <fullName>HSP 82</fullName>
    </alternativeName>
</protein>
<comment type="function">
    <text evidence="1">Molecular chaperone that promotes the maturation, structural maintenance and proper regulation of specific target proteins involved for instance in cell cycle control and signal transduction. Undergoes a functional cycle that is linked to its ATPase activity. This cycle probably induces conformational changes in the client proteins, thereby causing their activation. Interacts dynamically with various co-chaperones that modulate its substrate recognition, ATPase cycle and chaperone function. Required for piRNA biogenesis by facilitating loading of piRNAs into PIWI proteins (By similarity).</text>
</comment>
<comment type="subunit">
    <text evidence="1">Homodimer. Interacts with shu (By similarity).</text>
</comment>
<comment type="subcellular location">
    <subcellularLocation>
        <location>Cytoplasm</location>
    </subcellularLocation>
</comment>
<comment type="domain">
    <text evidence="1">The TPR repeat-binding motif mediates interaction with TPR repeat-containing proteins.</text>
</comment>
<comment type="similarity">
    <text evidence="3">Belongs to the heat shock protein 90 family.</text>
</comment>
<comment type="sequence caution" evidence="3">
    <conflict type="erroneous gene model prediction">
        <sequence resource="EMBL-CDS" id="EAL30982"/>
    </conflict>
</comment>
<feature type="chain" id="PRO_0000062934" description="Heat shock protein 83">
    <location>
        <begin position="1"/>
        <end position="717"/>
    </location>
</feature>
<feature type="region of interest" description="Disordered" evidence="2">
    <location>
        <begin position="213"/>
        <end position="263"/>
    </location>
</feature>
<feature type="region of interest" description="Disordered" evidence="2">
    <location>
        <begin position="687"/>
        <end position="717"/>
    </location>
</feature>
<feature type="short sequence motif" description="TPR repeat-binding">
    <location>
        <begin position="713"/>
        <end position="717"/>
    </location>
</feature>
<feature type="compositionally biased region" description="Basic and acidic residues" evidence="2">
    <location>
        <begin position="225"/>
        <end position="245"/>
    </location>
</feature>
<feature type="binding site" evidence="1">
    <location>
        <position position="39"/>
    </location>
    <ligand>
        <name>ATP</name>
        <dbReference type="ChEBI" id="CHEBI:30616"/>
    </ligand>
</feature>
<feature type="binding site" evidence="1">
    <location>
        <position position="81"/>
    </location>
    <ligand>
        <name>ATP</name>
        <dbReference type="ChEBI" id="CHEBI:30616"/>
    </ligand>
</feature>
<feature type="binding site" evidence="1">
    <location>
        <position position="100"/>
    </location>
    <ligand>
        <name>ATP</name>
        <dbReference type="ChEBI" id="CHEBI:30616"/>
    </ligand>
</feature>
<feature type="binding site" evidence="1">
    <location>
        <position position="126"/>
    </location>
    <ligand>
        <name>ATP</name>
        <dbReference type="ChEBI" id="CHEBI:30616"/>
    </ligand>
</feature>
<feature type="binding site" evidence="1">
    <location>
        <position position="385"/>
    </location>
    <ligand>
        <name>ATP</name>
        <dbReference type="ChEBI" id="CHEBI:30616"/>
    </ligand>
</feature>
<feature type="sequence variant" description="In strain: pseudo8 and pseudo9.">
    <original>G</original>
    <variation>S</variation>
    <location>
        <position position="171"/>
    </location>
</feature>